<keyword id="KW-0066">ATP synthesis</keyword>
<keyword id="KW-1003">Cell membrane</keyword>
<keyword id="KW-0139">CF(1)</keyword>
<keyword id="KW-0375">Hydrogen ion transport</keyword>
<keyword id="KW-0406">Ion transport</keyword>
<keyword id="KW-0472">Membrane</keyword>
<keyword id="KW-1185">Reference proteome</keyword>
<keyword id="KW-0813">Transport</keyword>
<gene>
    <name evidence="1" type="primary">atpC</name>
    <name type="ordered locus">cauri_1075</name>
</gene>
<evidence type="ECO:0000255" key="1">
    <source>
        <dbReference type="HAMAP-Rule" id="MF_00530"/>
    </source>
</evidence>
<evidence type="ECO:0000256" key="2">
    <source>
        <dbReference type="SAM" id="MobiDB-lite"/>
    </source>
</evidence>
<organism>
    <name type="scientific">Corynebacterium aurimucosum (strain ATCC 700975 / DSM 44827 / CIP 107346 / CN-1)</name>
    <name type="common">Corynebacterium nigricans</name>
    <dbReference type="NCBI Taxonomy" id="548476"/>
    <lineage>
        <taxon>Bacteria</taxon>
        <taxon>Bacillati</taxon>
        <taxon>Actinomycetota</taxon>
        <taxon>Actinomycetes</taxon>
        <taxon>Mycobacteriales</taxon>
        <taxon>Corynebacteriaceae</taxon>
        <taxon>Corynebacterium</taxon>
    </lineage>
</organism>
<comment type="function">
    <text evidence="1">Produces ATP from ADP in the presence of a proton gradient across the membrane.</text>
</comment>
<comment type="subunit">
    <text evidence="1">F-type ATPases have 2 components, CF(1) - the catalytic core - and CF(0) - the membrane proton channel. CF(1) has five subunits: alpha(3), beta(3), gamma(1), delta(1), epsilon(1). CF(0) has three main subunits: a, b and c.</text>
</comment>
<comment type="subcellular location">
    <subcellularLocation>
        <location evidence="1">Cell membrane</location>
        <topology evidence="1">Peripheral membrane protein</topology>
    </subcellularLocation>
</comment>
<comment type="similarity">
    <text evidence="1">Belongs to the ATPase epsilon chain family.</text>
</comment>
<protein>
    <recommendedName>
        <fullName evidence="1">ATP synthase epsilon chain</fullName>
    </recommendedName>
    <alternativeName>
        <fullName evidence="1">ATP synthase F1 sector epsilon subunit</fullName>
    </alternativeName>
    <alternativeName>
        <fullName evidence="1">F-ATPase epsilon subunit</fullName>
    </alternativeName>
</protein>
<reference key="1">
    <citation type="journal article" date="2010" name="BMC Genomics">
        <title>Complete genome sequence and lifestyle of black-pigmented Corynebacterium aurimucosum ATCC 700975 (formerly C. nigricans CN-1) isolated from a vaginal swab of a woman with spontaneous abortion.</title>
        <authorList>
            <person name="Trost E."/>
            <person name="Gotker S."/>
            <person name="Schneider J."/>
            <person name="Schneiker-Bekel S."/>
            <person name="Szczepanowski R."/>
            <person name="Tilker A."/>
            <person name="Viehoever P."/>
            <person name="Arnold W."/>
            <person name="Bekel T."/>
            <person name="Blom J."/>
            <person name="Gartemann K.H."/>
            <person name="Linke B."/>
            <person name="Goesmann A."/>
            <person name="Puhler A."/>
            <person name="Shukla S.K."/>
            <person name="Tauch A."/>
        </authorList>
    </citation>
    <scope>NUCLEOTIDE SEQUENCE [LARGE SCALE GENOMIC DNA]</scope>
    <source>
        <strain>ATCC 700975 / DSM 44827 / CIP 107346 / CN-1</strain>
    </source>
</reference>
<proteinExistence type="inferred from homology"/>
<feature type="chain" id="PRO_1000146321" description="ATP synthase epsilon chain">
    <location>
        <begin position="1"/>
        <end position="122"/>
    </location>
</feature>
<feature type="region of interest" description="Disordered" evidence="2">
    <location>
        <begin position="97"/>
        <end position="122"/>
    </location>
</feature>
<feature type="compositionally biased region" description="Basic and acidic residues" evidence="2">
    <location>
        <begin position="97"/>
        <end position="112"/>
    </location>
</feature>
<dbReference type="EMBL" id="CP001601">
    <property type="protein sequence ID" value="ACP32670.1"/>
    <property type="molecule type" value="Genomic_DNA"/>
</dbReference>
<dbReference type="RefSeq" id="WP_010187059.1">
    <property type="nucleotide sequence ID" value="NC_012590.1"/>
</dbReference>
<dbReference type="SMR" id="C3PFR6"/>
<dbReference type="STRING" id="548476.cauri_1075"/>
<dbReference type="GeneID" id="31923697"/>
<dbReference type="KEGG" id="car:cauri_1075"/>
<dbReference type="eggNOG" id="COG0355">
    <property type="taxonomic scope" value="Bacteria"/>
</dbReference>
<dbReference type="HOGENOM" id="CLU_084338_4_0_11"/>
<dbReference type="OrthoDB" id="9791445at2"/>
<dbReference type="Proteomes" id="UP000002077">
    <property type="component" value="Chromosome"/>
</dbReference>
<dbReference type="GO" id="GO:0005886">
    <property type="term" value="C:plasma membrane"/>
    <property type="evidence" value="ECO:0007669"/>
    <property type="project" value="UniProtKB-SubCell"/>
</dbReference>
<dbReference type="GO" id="GO:0045259">
    <property type="term" value="C:proton-transporting ATP synthase complex"/>
    <property type="evidence" value="ECO:0007669"/>
    <property type="project" value="UniProtKB-KW"/>
</dbReference>
<dbReference type="GO" id="GO:0005524">
    <property type="term" value="F:ATP binding"/>
    <property type="evidence" value="ECO:0007669"/>
    <property type="project" value="UniProtKB-UniRule"/>
</dbReference>
<dbReference type="GO" id="GO:0046933">
    <property type="term" value="F:proton-transporting ATP synthase activity, rotational mechanism"/>
    <property type="evidence" value="ECO:0007669"/>
    <property type="project" value="UniProtKB-UniRule"/>
</dbReference>
<dbReference type="CDD" id="cd12152">
    <property type="entry name" value="F1-ATPase_delta"/>
    <property type="match status" value="1"/>
</dbReference>
<dbReference type="Gene3D" id="2.60.15.10">
    <property type="entry name" value="F0F1 ATP synthase delta/epsilon subunit, N-terminal"/>
    <property type="match status" value="1"/>
</dbReference>
<dbReference type="HAMAP" id="MF_00530">
    <property type="entry name" value="ATP_synth_epsil_bac"/>
    <property type="match status" value="1"/>
</dbReference>
<dbReference type="InterPro" id="IPR001469">
    <property type="entry name" value="ATP_synth_F1_dsu/esu"/>
</dbReference>
<dbReference type="InterPro" id="IPR020546">
    <property type="entry name" value="ATP_synth_F1_dsu/esu_N"/>
</dbReference>
<dbReference type="InterPro" id="IPR036771">
    <property type="entry name" value="ATPsynth_dsu/esu_N"/>
</dbReference>
<dbReference type="NCBIfam" id="TIGR01216">
    <property type="entry name" value="ATP_synt_epsi"/>
    <property type="match status" value="1"/>
</dbReference>
<dbReference type="NCBIfam" id="NF001852">
    <property type="entry name" value="PRK00571.2-5"/>
    <property type="match status" value="1"/>
</dbReference>
<dbReference type="NCBIfam" id="NF009977">
    <property type="entry name" value="PRK13442.1"/>
    <property type="match status" value="1"/>
</dbReference>
<dbReference type="PANTHER" id="PTHR13822">
    <property type="entry name" value="ATP SYNTHASE DELTA/EPSILON CHAIN"/>
    <property type="match status" value="1"/>
</dbReference>
<dbReference type="PANTHER" id="PTHR13822:SF10">
    <property type="entry name" value="ATP SYNTHASE EPSILON CHAIN, CHLOROPLASTIC"/>
    <property type="match status" value="1"/>
</dbReference>
<dbReference type="Pfam" id="PF02823">
    <property type="entry name" value="ATP-synt_DE_N"/>
    <property type="match status" value="1"/>
</dbReference>
<dbReference type="SUPFAM" id="SSF51344">
    <property type="entry name" value="Epsilon subunit of F1F0-ATP synthase N-terminal domain"/>
    <property type="match status" value="1"/>
</dbReference>
<name>ATPE_CORA7</name>
<sequence>MADITAELVSVERLLWTGKATMVTAETTEGEIGVLPGHEPMVGQLIDNGVVTIHPVDGERLVAAVQGGFLSVSENKITVLADWSIWASEVDEAQAQEDLKSERELTRSRGDAALRATRRLNS</sequence>
<accession>C3PFR6</accession>